<dbReference type="EMBL" id="CP001184">
    <property type="protein sequence ID" value="ACI60213.1"/>
    <property type="molecule type" value="Genomic_DNA"/>
</dbReference>
<dbReference type="SMR" id="B5ZC49"/>
<dbReference type="STRING" id="565575.UUR10_0633"/>
<dbReference type="KEGG" id="uue:UUR10_0633"/>
<dbReference type="eggNOG" id="COG0080">
    <property type="taxonomic scope" value="Bacteria"/>
</dbReference>
<dbReference type="HOGENOM" id="CLU_074237_2_2_14"/>
<dbReference type="OrthoDB" id="9802408at2"/>
<dbReference type="Proteomes" id="UP000002018">
    <property type="component" value="Chromosome"/>
</dbReference>
<dbReference type="GO" id="GO:0022625">
    <property type="term" value="C:cytosolic large ribosomal subunit"/>
    <property type="evidence" value="ECO:0007669"/>
    <property type="project" value="TreeGrafter"/>
</dbReference>
<dbReference type="GO" id="GO:0070180">
    <property type="term" value="F:large ribosomal subunit rRNA binding"/>
    <property type="evidence" value="ECO:0007669"/>
    <property type="project" value="UniProtKB-UniRule"/>
</dbReference>
<dbReference type="GO" id="GO:0003735">
    <property type="term" value="F:structural constituent of ribosome"/>
    <property type="evidence" value="ECO:0007669"/>
    <property type="project" value="InterPro"/>
</dbReference>
<dbReference type="GO" id="GO:0006412">
    <property type="term" value="P:translation"/>
    <property type="evidence" value="ECO:0007669"/>
    <property type="project" value="UniProtKB-UniRule"/>
</dbReference>
<dbReference type="CDD" id="cd00349">
    <property type="entry name" value="Ribosomal_L11"/>
    <property type="match status" value="1"/>
</dbReference>
<dbReference type="FunFam" id="3.30.1550.10:FF:000006">
    <property type="entry name" value="50S ribosomal protein L11"/>
    <property type="match status" value="1"/>
</dbReference>
<dbReference type="Gene3D" id="1.10.10.250">
    <property type="entry name" value="Ribosomal protein L11, C-terminal domain"/>
    <property type="match status" value="1"/>
</dbReference>
<dbReference type="Gene3D" id="3.30.1550.10">
    <property type="entry name" value="Ribosomal protein L11/L12, N-terminal domain"/>
    <property type="match status" value="1"/>
</dbReference>
<dbReference type="HAMAP" id="MF_00736">
    <property type="entry name" value="Ribosomal_uL11"/>
    <property type="match status" value="1"/>
</dbReference>
<dbReference type="InterPro" id="IPR000911">
    <property type="entry name" value="Ribosomal_uL11"/>
</dbReference>
<dbReference type="InterPro" id="IPR006519">
    <property type="entry name" value="Ribosomal_uL11_bac-typ"/>
</dbReference>
<dbReference type="InterPro" id="IPR020783">
    <property type="entry name" value="Ribosomal_uL11_C"/>
</dbReference>
<dbReference type="InterPro" id="IPR036769">
    <property type="entry name" value="Ribosomal_uL11_C_sf"/>
</dbReference>
<dbReference type="InterPro" id="IPR020785">
    <property type="entry name" value="Ribosomal_uL11_CS"/>
</dbReference>
<dbReference type="InterPro" id="IPR020784">
    <property type="entry name" value="Ribosomal_uL11_N"/>
</dbReference>
<dbReference type="InterPro" id="IPR036796">
    <property type="entry name" value="Ribosomal_uL11_N_sf"/>
</dbReference>
<dbReference type="NCBIfam" id="TIGR01632">
    <property type="entry name" value="L11_bact"/>
    <property type="match status" value="1"/>
</dbReference>
<dbReference type="PANTHER" id="PTHR11661">
    <property type="entry name" value="60S RIBOSOMAL PROTEIN L12"/>
    <property type="match status" value="1"/>
</dbReference>
<dbReference type="PANTHER" id="PTHR11661:SF1">
    <property type="entry name" value="LARGE RIBOSOMAL SUBUNIT PROTEIN UL11M"/>
    <property type="match status" value="1"/>
</dbReference>
<dbReference type="Pfam" id="PF00298">
    <property type="entry name" value="Ribosomal_L11"/>
    <property type="match status" value="1"/>
</dbReference>
<dbReference type="Pfam" id="PF03946">
    <property type="entry name" value="Ribosomal_L11_N"/>
    <property type="match status" value="1"/>
</dbReference>
<dbReference type="SMART" id="SM00649">
    <property type="entry name" value="RL11"/>
    <property type="match status" value="1"/>
</dbReference>
<dbReference type="SUPFAM" id="SSF54747">
    <property type="entry name" value="Ribosomal L11/L12e N-terminal domain"/>
    <property type="match status" value="1"/>
</dbReference>
<dbReference type="SUPFAM" id="SSF46906">
    <property type="entry name" value="Ribosomal protein L11, C-terminal domain"/>
    <property type="match status" value="1"/>
</dbReference>
<dbReference type="PROSITE" id="PS00359">
    <property type="entry name" value="RIBOSOMAL_L11"/>
    <property type="match status" value="1"/>
</dbReference>
<sequence>MAPKKKEVTRIAKLNLIGGQAKPGPALASVGINMAEFTKSFNDKTKDQNGKVIPVIITAYKDKSFDYVVKTTPVTYLLKDAAKIKSGAKDPKKQVVATISKEQALEIARYKLVDMTAYDEEAALRMIAGSAKQMGIAIEGVSAYKEKKGN</sequence>
<protein>
    <recommendedName>
        <fullName evidence="1">Large ribosomal subunit protein uL11</fullName>
    </recommendedName>
    <alternativeName>
        <fullName evidence="2">50S ribosomal protein L11</fullName>
    </alternativeName>
</protein>
<proteinExistence type="inferred from homology"/>
<accession>B5ZC49</accession>
<reference key="1">
    <citation type="submission" date="2008-10" db="EMBL/GenBank/DDBJ databases">
        <title>Genome sequence of Ureaplasma urealyticum serovar 10 ATCC-33699.</title>
        <authorList>
            <person name="Shrivastava S."/>
            <person name="Methe B.A."/>
            <person name="Glass J."/>
            <person name="White K."/>
            <person name="Duffy L.B."/>
        </authorList>
    </citation>
    <scope>NUCLEOTIDE SEQUENCE [LARGE SCALE GENOMIC DNA]</scope>
    <source>
        <strain>ATCC 33699 / Western</strain>
    </source>
</reference>
<feature type="chain" id="PRO_1000195743" description="Large ribosomal subunit protein uL11">
    <location>
        <begin position="1"/>
        <end position="150"/>
    </location>
</feature>
<comment type="function">
    <text evidence="1">Forms part of the ribosomal stalk which helps the ribosome interact with GTP-bound translation factors.</text>
</comment>
<comment type="subunit">
    <text evidence="1">Part of the ribosomal stalk of the 50S ribosomal subunit. Interacts with L10 and the large rRNA to form the base of the stalk. L10 forms an elongated spine to which L12 dimers bind in a sequential fashion forming a multimeric L10(L12)X complex.</text>
</comment>
<comment type="PTM">
    <text evidence="1">One or more lysine residues are methylated.</text>
</comment>
<comment type="similarity">
    <text evidence="1">Belongs to the universal ribosomal protein uL11 family.</text>
</comment>
<gene>
    <name evidence="1" type="primary">rplK</name>
    <name type="ordered locus">UUR10_0633</name>
</gene>
<evidence type="ECO:0000255" key="1">
    <source>
        <dbReference type="HAMAP-Rule" id="MF_00736"/>
    </source>
</evidence>
<evidence type="ECO:0000305" key="2"/>
<keyword id="KW-0488">Methylation</keyword>
<keyword id="KW-0687">Ribonucleoprotein</keyword>
<keyword id="KW-0689">Ribosomal protein</keyword>
<keyword id="KW-0694">RNA-binding</keyword>
<keyword id="KW-0699">rRNA-binding</keyword>
<name>RL11_UREU1</name>
<organism>
    <name type="scientific">Ureaplasma urealyticum serovar 10 (strain ATCC 33699 / Western)</name>
    <dbReference type="NCBI Taxonomy" id="565575"/>
    <lineage>
        <taxon>Bacteria</taxon>
        <taxon>Bacillati</taxon>
        <taxon>Mycoplasmatota</taxon>
        <taxon>Mycoplasmoidales</taxon>
        <taxon>Mycoplasmoidaceae</taxon>
        <taxon>Ureaplasma</taxon>
    </lineage>
</organism>